<accession>A7FKA8</accession>
<gene>
    <name type="ordered locus">YpsIP31758_2721</name>
</gene>
<name>NDPA_YERP3</name>
<sequence length="334" mass="37740">MSLDIDQIALHQLIKRDEQTLDVVLRDSLLPTNAVVEEMMAELHRVYSAKSKAYGLFNEQSELADALKRSRKGDEDFLSFSRAATGRLRDELAKYPFAEGGVVLFCQYRYLAVEYLLISVLSSCHSMRVNEQLDLSTTHYLDINRADIVARIDLTEWETNPESTRYLTFLKGRVGRKVSDFFMDFLSAAEGLDTKAQNRGLLQAVDDYCADAELGKNERQAYRQQVYSYCNEQLQAGEEIALQVLAQELPKLGEKDFQQFSAEQGYALEESFPADRGTLRQLTKFAGSGGGLSINFDALLLDERIFWDAATDTLTIKGTPPNLRDQLQRRAGSK</sequence>
<proteinExistence type="inferred from homology"/>
<feature type="chain" id="PRO_1000062111" description="Nucleoid-associated protein YpsIP31758_2721">
    <location>
        <begin position="1"/>
        <end position="334"/>
    </location>
</feature>
<reference key="1">
    <citation type="journal article" date="2007" name="PLoS Genet.">
        <title>The complete genome sequence of Yersinia pseudotuberculosis IP31758, the causative agent of Far East scarlet-like fever.</title>
        <authorList>
            <person name="Eppinger M."/>
            <person name="Rosovitz M.J."/>
            <person name="Fricke W.F."/>
            <person name="Rasko D.A."/>
            <person name="Kokorina G."/>
            <person name="Fayolle C."/>
            <person name="Lindler L.E."/>
            <person name="Carniel E."/>
            <person name="Ravel J."/>
        </authorList>
    </citation>
    <scope>NUCLEOTIDE SEQUENCE [LARGE SCALE GENOMIC DNA]</scope>
    <source>
        <strain>IP 31758</strain>
    </source>
</reference>
<organism>
    <name type="scientific">Yersinia pseudotuberculosis serotype O:1b (strain IP 31758)</name>
    <dbReference type="NCBI Taxonomy" id="349747"/>
    <lineage>
        <taxon>Bacteria</taxon>
        <taxon>Pseudomonadati</taxon>
        <taxon>Pseudomonadota</taxon>
        <taxon>Gammaproteobacteria</taxon>
        <taxon>Enterobacterales</taxon>
        <taxon>Yersiniaceae</taxon>
        <taxon>Yersinia</taxon>
    </lineage>
</organism>
<protein>
    <recommendedName>
        <fullName evidence="1">Nucleoid-associated protein YpsIP31758_2721</fullName>
    </recommendedName>
</protein>
<dbReference type="EMBL" id="CP000720">
    <property type="protein sequence ID" value="ABS49726.1"/>
    <property type="molecule type" value="Genomic_DNA"/>
</dbReference>
<dbReference type="SMR" id="A7FKA8"/>
<dbReference type="KEGG" id="ypi:YpsIP31758_2721"/>
<dbReference type="HOGENOM" id="CLU_063050_0_1_6"/>
<dbReference type="Proteomes" id="UP000002412">
    <property type="component" value="Chromosome"/>
</dbReference>
<dbReference type="GO" id="GO:0043590">
    <property type="term" value="C:bacterial nucleoid"/>
    <property type="evidence" value="ECO:0007669"/>
    <property type="project" value="TreeGrafter"/>
</dbReference>
<dbReference type="GO" id="GO:0005737">
    <property type="term" value="C:cytoplasm"/>
    <property type="evidence" value="ECO:0007669"/>
    <property type="project" value="UniProtKB-UniRule"/>
</dbReference>
<dbReference type="GO" id="GO:0003690">
    <property type="term" value="F:double-stranded DNA binding"/>
    <property type="evidence" value="ECO:0007669"/>
    <property type="project" value="TreeGrafter"/>
</dbReference>
<dbReference type="GO" id="GO:0003727">
    <property type="term" value="F:single-stranded RNA binding"/>
    <property type="evidence" value="ECO:0007669"/>
    <property type="project" value="TreeGrafter"/>
</dbReference>
<dbReference type="HAMAP" id="MF_00730">
    <property type="entry name" value="NdpA"/>
    <property type="match status" value="1"/>
</dbReference>
<dbReference type="InterPro" id="IPR007358">
    <property type="entry name" value="Nucleoid_associated_NdpA"/>
</dbReference>
<dbReference type="NCBIfam" id="NF001557">
    <property type="entry name" value="PRK00378.1"/>
    <property type="match status" value="1"/>
</dbReference>
<dbReference type="PANTHER" id="PTHR38772">
    <property type="match status" value="1"/>
</dbReference>
<dbReference type="PANTHER" id="PTHR38772:SF1">
    <property type="entry name" value="NUCLEOID-ASSOCIATED PROTEIN YEJK"/>
    <property type="match status" value="1"/>
</dbReference>
<dbReference type="Pfam" id="PF04245">
    <property type="entry name" value="NA37"/>
    <property type="match status" value="1"/>
</dbReference>
<comment type="subcellular location">
    <subcellularLocation>
        <location evidence="1">Cytoplasm</location>
        <location evidence="1">Nucleoid</location>
    </subcellularLocation>
</comment>
<comment type="similarity">
    <text evidence="1">Belongs to the YejK family.</text>
</comment>
<evidence type="ECO:0000255" key="1">
    <source>
        <dbReference type="HAMAP-Rule" id="MF_00730"/>
    </source>
</evidence>
<keyword id="KW-0963">Cytoplasm</keyword>